<dbReference type="EC" id="1.15.1.1"/>
<dbReference type="EMBL" id="X77021">
    <property type="protein sequence ID" value="CAA54319.1"/>
    <property type="molecule type" value="Genomic_DNA"/>
</dbReference>
<dbReference type="EMBL" id="X85790">
    <property type="protein sequence ID" value="CAA59790.1"/>
    <property type="molecule type" value="mRNA"/>
</dbReference>
<dbReference type="EMBL" id="FO080426">
    <property type="protein sequence ID" value="CCD63614.1"/>
    <property type="molecule type" value="Genomic_DNA"/>
</dbReference>
<dbReference type="PIR" id="S52721">
    <property type="entry name" value="S52721"/>
</dbReference>
<dbReference type="RefSeq" id="NP_510764.1">
    <property type="nucleotide sequence ID" value="NM_078363.9"/>
</dbReference>
<dbReference type="PDB" id="3DC5">
    <property type="method" value="X-ray"/>
    <property type="resolution" value="1.70 A"/>
    <property type="chains" value="A/C=25-218"/>
</dbReference>
<dbReference type="PDB" id="4X9Q">
    <property type="method" value="X-ray"/>
    <property type="resolution" value="1.77 A"/>
    <property type="chains" value="A/C=25-218"/>
</dbReference>
<dbReference type="PDB" id="5AG2">
    <property type="method" value="X-ray"/>
    <property type="resolution" value="1.77 A"/>
    <property type="chains" value="A/C=25-218"/>
</dbReference>
<dbReference type="PDB" id="6ELK">
    <property type="method" value="X-ray"/>
    <property type="resolution" value="1.65 A"/>
    <property type="chains" value="A/C=25-218"/>
</dbReference>
<dbReference type="PDB" id="6QZM">
    <property type="method" value="X-ray"/>
    <property type="resolution" value="1.60 A"/>
    <property type="chains" value="A/C=25-218"/>
</dbReference>
<dbReference type="PDB" id="6QZN">
    <property type="method" value="X-ray"/>
    <property type="resolution" value="1.64 A"/>
    <property type="chains" value="A/C=25-218"/>
</dbReference>
<dbReference type="PDB" id="6S0D">
    <property type="method" value="X-ray"/>
    <property type="resolution" value="1.52 A"/>
    <property type="chains" value="A/C=25-218"/>
</dbReference>
<dbReference type="PDBsum" id="3DC5"/>
<dbReference type="PDBsum" id="4X9Q"/>
<dbReference type="PDBsum" id="5AG2"/>
<dbReference type="PDBsum" id="6ELK"/>
<dbReference type="PDBsum" id="6QZM"/>
<dbReference type="PDBsum" id="6QZN"/>
<dbReference type="PDBsum" id="6S0D"/>
<dbReference type="SMR" id="P41977"/>
<dbReference type="FunCoup" id="P41977">
    <property type="interactions" value="957"/>
</dbReference>
<dbReference type="STRING" id="6239.C08A9.1.1"/>
<dbReference type="iPTMnet" id="P41977"/>
<dbReference type="PaxDb" id="6239-C08A9.1"/>
<dbReference type="PeptideAtlas" id="P41977"/>
<dbReference type="EnsemblMetazoa" id="C08A9.1.1">
    <property type="protein sequence ID" value="C08A9.1.1"/>
    <property type="gene ID" value="WBGene00004932"/>
</dbReference>
<dbReference type="GeneID" id="181748"/>
<dbReference type="KEGG" id="cel:CELE_C08A9.1"/>
<dbReference type="UCSC" id="C08A9.1.1">
    <property type="organism name" value="c. elegans"/>
</dbReference>
<dbReference type="AGR" id="WB:WBGene00004932"/>
<dbReference type="CTD" id="181748"/>
<dbReference type="WormBase" id="C08A9.1">
    <property type="protein sequence ID" value="CE08002"/>
    <property type="gene ID" value="WBGene00004932"/>
    <property type="gene designation" value="sod-3"/>
</dbReference>
<dbReference type="eggNOG" id="KOG0876">
    <property type="taxonomic scope" value="Eukaryota"/>
</dbReference>
<dbReference type="GeneTree" id="ENSGT00390000011877"/>
<dbReference type="HOGENOM" id="CLU_031625_2_1_1"/>
<dbReference type="InParanoid" id="P41977"/>
<dbReference type="OMA" id="GSYEGWK"/>
<dbReference type="OrthoDB" id="239262at2759"/>
<dbReference type="PhylomeDB" id="P41977"/>
<dbReference type="EvolutionaryTrace" id="P41977"/>
<dbReference type="PRO" id="PR:P41977"/>
<dbReference type="Proteomes" id="UP000001940">
    <property type="component" value="Chromosome X"/>
</dbReference>
<dbReference type="Bgee" id="WBGene00004932">
    <property type="expression patterns" value="Expressed in adult organism and 2 other cell types or tissues"/>
</dbReference>
<dbReference type="GO" id="GO:0005739">
    <property type="term" value="C:mitochondrion"/>
    <property type="evidence" value="ECO:0000314"/>
    <property type="project" value="WormBase"/>
</dbReference>
<dbReference type="GO" id="GO:0098803">
    <property type="term" value="C:respiratory chain complex"/>
    <property type="evidence" value="ECO:0000314"/>
    <property type="project" value="WormBase"/>
</dbReference>
<dbReference type="GO" id="GO:0030145">
    <property type="term" value="F:manganese ion binding"/>
    <property type="evidence" value="ECO:0000318"/>
    <property type="project" value="GO_Central"/>
</dbReference>
<dbReference type="GO" id="GO:0042803">
    <property type="term" value="F:protein homodimerization activity"/>
    <property type="evidence" value="ECO:0000314"/>
    <property type="project" value="WormBase"/>
</dbReference>
<dbReference type="GO" id="GO:0004784">
    <property type="term" value="F:superoxide dismutase activity"/>
    <property type="evidence" value="ECO:0000314"/>
    <property type="project" value="WormBase"/>
</dbReference>
<dbReference type="GO" id="GO:0019430">
    <property type="term" value="P:removal of superoxide radicals"/>
    <property type="evidence" value="ECO:0000315"/>
    <property type="project" value="WormBase"/>
</dbReference>
<dbReference type="FunFam" id="1.10.287.990:FF:000001">
    <property type="entry name" value="Superoxide dismutase"/>
    <property type="match status" value="1"/>
</dbReference>
<dbReference type="FunFam" id="3.55.40.20:FF:000003">
    <property type="entry name" value="Superoxide dismutase [Mn], mitochondrial"/>
    <property type="match status" value="1"/>
</dbReference>
<dbReference type="Gene3D" id="1.10.287.990">
    <property type="entry name" value="Fe,Mn superoxide dismutase (SOD) domain"/>
    <property type="match status" value="1"/>
</dbReference>
<dbReference type="Gene3D" id="3.55.40.20">
    <property type="entry name" value="Iron/manganese superoxide dismutase, C-terminal domain"/>
    <property type="match status" value="1"/>
</dbReference>
<dbReference type="InterPro" id="IPR050265">
    <property type="entry name" value="Fe/Mn_Superoxide_Dismutase"/>
</dbReference>
<dbReference type="InterPro" id="IPR001189">
    <property type="entry name" value="Mn/Fe_SOD"/>
</dbReference>
<dbReference type="InterPro" id="IPR019833">
    <property type="entry name" value="Mn/Fe_SOD_BS"/>
</dbReference>
<dbReference type="InterPro" id="IPR019832">
    <property type="entry name" value="Mn/Fe_SOD_C"/>
</dbReference>
<dbReference type="InterPro" id="IPR019831">
    <property type="entry name" value="Mn/Fe_SOD_N"/>
</dbReference>
<dbReference type="InterPro" id="IPR036324">
    <property type="entry name" value="Mn/Fe_SOD_N_sf"/>
</dbReference>
<dbReference type="InterPro" id="IPR036314">
    <property type="entry name" value="SOD_C_sf"/>
</dbReference>
<dbReference type="PANTHER" id="PTHR11404">
    <property type="entry name" value="SUPEROXIDE DISMUTASE 2"/>
    <property type="match status" value="1"/>
</dbReference>
<dbReference type="PANTHER" id="PTHR11404:SF6">
    <property type="entry name" value="SUPEROXIDE DISMUTASE [MN], MITOCHONDRIAL"/>
    <property type="match status" value="1"/>
</dbReference>
<dbReference type="Pfam" id="PF02777">
    <property type="entry name" value="Sod_Fe_C"/>
    <property type="match status" value="1"/>
</dbReference>
<dbReference type="Pfam" id="PF00081">
    <property type="entry name" value="Sod_Fe_N"/>
    <property type="match status" value="1"/>
</dbReference>
<dbReference type="PIRSF" id="PIRSF000349">
    <property type="entry name" value="SODismutase"/>
    <property type="match status" value="1"/>
</dbReference>
<dbReference type="PRINTS" id="PR01703">
    <property type="entry name" value="MNSODISMTASE"/>
</dbReference>
<dbReference type="SUPFAM" id="SSF54719">
    <property type="entry name" value="Fe,Mn superoxide dismutase (SOD), C-terminal domain"/>
    <property type="match status" value="1"/>
</dbReference>
<dbReference type="SUPFAM" id="SSF46609">
    <property type="entry name" value="Fe,Mn superoxide dismutase (SOD), N-terminal domain"/>
    <property type="match status" value="1"/>
</dbReference>
<dbReference type="PROSITE" id="PS00088">
    <property type="entry name" value="SOD_MN"/>
    <property type="match status" value="1"/>
</dbReference>
<protein>
    <recommendedName>
        <fullName>Superoxide dismutase [Mn] 2, mitochondrial</fullName>
        <ecNumber>1.15.1.1</ecNumber>
    </recommendedName>
</protein>
<organism>
    <name type="scientific">Caenorhabditis elegans</name>
    <dbReference type="NCBI Taxonomy" id="6239"/>
    <lineage>
        <taxon>Eukaryota</taxon>
        <taxon>Metazoa</taxon>
        <taxon>Ecdysozoa</taxon>
        <taxon>Nematoda</taxon>
        <taxon>Chromadorea</taxon>
        <taxon>Rhabditida</taxon>
        <taxon>Rhabditina</taxon>
        <taxon>Rhabditomorpha</taxon>
        <taxon>Rhabditoidea</taxon>
        <taxon>Rhabditidae</taxon>
        <taxon>Peloderinae</taxon>
        <taxon>Caenorhabditis</taxon>
    </lineage>
</organism>
<feature type="transit peptide" description="Mitochondrion" evidence="1">
    <location>
        <begin position="1"/>
        <end position="24"/>
    </location>
</feature>
<feature type="chain" id="PRO_0000032877" description="Superoxide dismutase [Mn] 2, mitochondrial">
    <location>
        <begin position="25"/>
        <end position="218"/>
    </location>
</feature>
<feature type="binding site" evidence="1">
    <location>
        <position position="50"/>
    </location>
    <ligand>
        <name>Mn(2+)</name>
        <dbReference type="ChEBI" id="CHEBI:29035"/>
    </ligand>
</feature>
<feature type="binding site" evidence="1">
    <location>
        <position position="98"/>
    </location>
    <ligand>
        <name>Mn(2+)</name>
        <dbReference type="ChEBI" id="CHEBI:29035"/>
    </ligand>
</feature>
<feature type="binding site" evidence="1">
    <location>
        <position position="179"/>
    </location>
    <ligand>
        <name>Mn(2+)</name>
        <dbReference type="ChEBI" id="CHEBI:29035"/>
    </ligand>
</feature>
<feature type="binding site" evidence="1">
    <location>
        <position position="183"/>
    </location>
    <ligand>
        <name>Mn(2+)</name>
        <dbReference type="ChEBI" id="CHEBI:29035"/>
    </ligand>
</feature>
<feature type="turn" evidence="4">
    <location>
        <begin position="35"/>
        <end position="41"/>
    </location>
</feature>
<feature type="helix" evidence="4">
    <location>
        <begin position="44"/>
        <end position="52"/>
    </location>
</feature>
<feature type="helix" evidence="4">
    <location>
        <begin position="54"/>
        <end position="75"/>
    </location>
</feature>
<feature type="helix" evidence="4">
    <location>
        <begin position="78"/>
        <end position="83"/>
    </location>
</feature>
<feature type="helix" evidence="4">
    <location>
        <begin position="85"/>
        <end position="103"/>
    </location>
</feature>
<feature type="helix" evidence="4">
    <location>
        <begin position="114"/>
        <end position="124"/>
    </location>
</feature>
<feature type="helix" evidence="4">
    <location>
        <begin position="127"/>
        <end position="139"/>
    </location>
</feature>
<feature type="strand" evidence="4">
    <location>
        <begin position="143"/>
        <end position="152"/>
    </location>
</feature>
<feature type="turn" evidence="4">
    <location>
        <begin position="153"/>
        <end position="156"/>
    </location>
</feature>
<feature type="strand" evidence="4">
    <location>
        <begin position="157"/>
        <end position="164"/>
    </location>
</feature>
<feature type="strand" evidence="4">
    <location>
        <begin position="171"/>
        <end position="179"/>
    </location>
</feature>
<feature type="helix" evidence="4">
    <location>
        <begin position="182"/>
        <end position="184"/>
    </location>
</feature>
<feature type="helix" evidence="4">
    <location>
        <begin position="186"/>
        <end position="189"/>
    </location>
</feature>
<feature type="helix" evidence="4">
    <location>
        <begin position="193"/>
        <end position="200"/>
    </location>
</feature>
<feature type="helix" evidence="4">
    <location>
        <begin position="201"/>
        <end position="203"/>
    </location>
</feature>
<feature type="helix" evidence="4">
    <location>
        <begin position="206"/>
        <end position="217"/>
    </location>
</feature>
<proteinExistence type="evidence at protein level"/>
<reference key="1">
    <citation type="journal article" date="1994" name="Biochem. Mol. Biol. Int.">
        <title>The manganese superoxide dismutase gene of Caenorhabditis elegans.</title>
        <authorList>
            <person name="Giglio M.P."/>
            <person name="Hunter T."/>
            <person name="Bannister J.V."/>
            <person name="Bannister W.H."/>
            <person name="Hunter G.J."/>
        </authorList>
    </citation>
    <scope>NUCLEOTIDE SEQUENCE [GENOMIC DNA / MRNA]</scope>
    <source>
        <strain>Bristol N2</strain>
    </source>
</reference>
<reference key="2">
    <citation type="journal article" date="1998" name="Science">
        <title>Genome sequence of the nematode C. elegans: a platform for investigating biology.</title>
        <authorList>
            <consortium name="The C. elegans sequencing consortium"/>
        </authorList>
    </citation>
    <scope>NUCLEOTIDE SEQUENCE [LARGE SCALE GENOMIC DNA]</scope>
    <source>
        <strain>Bristol N2</strain>
    </source>
</reference>
<reference key="3">
    <citation type="journal article" date="2008" name="J. Cell. Physiol.">
        <title>The MAP kinase JNK-1 of Caenorhabditis elegans: location, activation, and influences over temperature-dependent insulin-like signaling, stress responses, and fitness.</title>
        <authorList>
            <person name="Wolf M."/>
            <person name="Nunes F."/>
            <person name="Henkel A."/>
            <person name="Heinick A."/>
            <person name="Paul R.J."/>
        </authorList>
    </citation>
    <scope>SUBCELLULAR LOCATION</scope>
    <scope>TISSUE SPECIFICITY</scope>
    <scope>INDUCTION BY HEAT</scope>
</reference>
<gene>
    <name type="primary">sod-3</name>
    <name type="ORF">C08A9.1</name>
</gene>
<evidence type="ECO:0000250" key="1"/>
<evidence type="ECO:0000269" key="2">
    <source>
    </source>
</evidence>
<evidence type="ECO:0000305" key="3"/>
<evidence type="ECO:0007829" key="4">
    <source>
        <dbReference type="PDB" id="6S0D"/>
    </source>
</evidence>
<sequence>MLQSTARTASKLVQPVAGVLAVRSKHTLPDLPFDYADLEPVISHEIMQLHHQKHHATYVNNLNQIEEKLHEAVSKGNLKEAIALQPALKFNGGGHINHSIFWTNLAKDGGEPSKELMDTIKRDFGSLDNLQKRLSDITIAVQGSGWGWLGYCKKDKILKIATCANQDPLEGMVPLFGIDVWEHAYYLQYKNVRPDYVHAIWKIANWKNISERFANARQ</sequence>
<accession>P41977</accession>
<accession>Q27469</accession>
<name>SODM2_CAEEL</name>
<comment type="function">
    <text>Destroys superoxide anion radicals which are normally produced within the cells and which are toxic to biological systems.</text>
</comment>
<comment type="catalytic activity">
    <reaction>
        <text>2 superoxide + 2 H(+) = H2O2 + O2</text>
        <dbReference type="Rhea" id="RHEA:20696"/>
        <dbReference type="ChEBI" id="CHEBI:15378"/>
        <dbReference type="ChEBI" id="CHEBI:15379"/>
        <dbReference type="ChEBI" id="CHEBI:16240"/>
        <dbReference type="ChEBI" id="CHEBI:18421"/>
        <dbReference type="EC" id="1.15.1.1"/>
    </reaction>
</comment>
<comment type="cofactor">
    <cofactor evidence="1">
        <name>Mn(2+)</name>
        <dbReference type="ChEBI" id="CHEBI:29035"/>
    </cofactor>
    <text evidence="1">Binds 1 Mn(2+) ion per subunit.</text>
</comment>
<comment type="subunit">
    <text evidence="1">Homotetramer.</text>
</comment>
<comment type="subcellular location">
    <subcellularLocation>
        <location evidence="2">Mitochondrion</location>
    </subcellularLocation>
</comment>
<comment type="tissue specificity">
    <text evidence="2">Expressed in pharynx and rectum. Upon thermal stress, expressed in vulva, body wall muscles and hypodermis.</text>
</comment>
<comment type="induction">
    <text evidence="2">By heat.</text>
</comment>
<comment type="similarity">
    <text evidence="3">Belongs to the iron/manganese superoxide dismutase family.</text>
</comment>
<keyword id="KW-0002">3D-structure</keyword>
<keyword id="KW-0464">Manganese</keyword>
<keyword id="KW-0479">Metal-binding</keyword>
<keyword id="KW-0496">Mitochondrion</keyword>
<keyword id="KW-0560">Oxidoreductase</keyword>
<keyword id="KW-1185">Reference proteome</keyword>
<keyword id="KW-0809">Transit peptide</keyword>